<feature type="signal peptide" evidence="1">
    <location>
        <begin position="1"/>
        <end position="20"/>
    </location>
</feature>
<feature type="chain" id="PRO_0000239742" description="Glutamate receptor 3.1">
    <location>
        <begin position="21"/>
        <end position="938"/>
    </location>
</feature>
<feature type="topological domain" description="Extracellular" evidence="1">
    <location>
        <begin position="21"/>
        <end position="588"/>
    </location>
</feature>
<feature type="transmembrane region" description="Helical" evidence="1">
    <location>
        <begin position="589"/>
        <end position="609"/>
    </location>
</feature>
<feature type="topological domain" description="Cytoplasmic" evidence="1">
    <location>
        <begin position="610"/>
        <end position="618"/>
    </location>
</feature>
<feature type="transmembrane region" description="Helical" evidence="1">
    <location>
        <begin position="619"/>
        <end position="639"/>
    </location>
</feature>
<feature type="topological domain" description="Cytoplasmic" evidence="1">
    <location>
        <begin position="640"/>
        <end position="650"/>
    </location>
</feature>
<feature type="transmembrane region" description="Helical" evidence="1">
    <location>
        <begin position="651"/>
        <end position="671"/>
    </location>
</feature>
<feature type="topological domain" description="Extracellular" evidence="1">
    <location>
        <begin position="672"/>
        <end position="830"/>
    </location>
</feature>
<feature type="transmembrane region" description="Helical" evidence="1">
    <location>
        <begin position="831"/>
        <end position="851"/>
    </location>
</feature>
<feature type="topological domain" description="Cytoplasmic" evidence="1">
    <location>
        <begin position="852"/>
        <end position="938"/>
    </location>
</feature>
<feature type="region of interest" description="Disordered" evidence="2">
    <location>
        <begin position="906"/>
        <end position="938"/>
    </location>
</feature>
<feature type="compositionally biased region" description="Low complexity" evidence="2">
    <location>
        <begin position="922"/>
        <end position="938"/>
    </location>
</feature>
<feature type="glycosylation site" description="N-linked (GlcNAc...) asparagine" evidence="1">
    <location>
        <position position="22"/>
    </location>
</feature>
<feature type="glycosylation site" description="N-linked (GlcNAc...) asparagine" evidence="1">
    <location>
        <position position="39"/>
    </location>
</feature>
<feature type="glycosylation site" description="N-linked (GlcNAc...) asparagine" evidence="1">
    <location>
        <position position="59"/>
    </location>
</feature>
<feature type="glycosylation site" description="N-linked (GlcNAc...) asparagine" evidence="1">
    <location>
        <position position="340"/>
    </location>
</feature>
<feature type="glycosylation site" description="N-linked (GlcNAc...) asparagine" evidence="1">
    <location>
        <position position="418"/>
    </location>
</feature>
<feature type="glycosylation site" description="N-linked (GlcNAc...) asparagine" evidence="1">
    <location>
        <position position="436"/>
    </location>
</feature>
<feature type="glycosylation site" description="N-linked (GlcNAc...) asparagine" evidence="1">
    <location>
        <position position="551"/>
    </location>
</feature>
<comment type="function">
    <text evidence="3">Glutamate-gated receptor that probably acts as a non-selective cation channel. Involved in root development. May regulate cell proliferation and cell death in the root apex.</text>
</comment>
<comment type="subunit">
    <text evidence="3">May form homomultimers.</text>
</comment>
<comment type="subcellular location">
    <subcellularLocation>
        <location>Membrane</location>
        <topology>Multi-pass membrane protein</topology>
    </subcellularLocation>
</comment>
<comment type="tissue specificity">
    <text evidence="3">Expressed at low levels in roots and leaves.</text>
</comment>
<comment type="induction">
    <text>By abiotic stresses.</text>
</comment>
<comment type="disruption phenotype">
    <text evidence="3">Plants are defective in root elongation and show reduced mitotic activity and increased cell death in the root apical meristem (RAM).</text>
</comment>
<comment type="similarity">
    <text evidence="4">Belongs to the glutamate-gated ion channel (TC 1.A.10.1) family.</text>
</comment>
<accession>Q7XP59</accession>
<proteinExistence type="evidence at protein level"/>
<reference key="1">
    <citation type="journal article" date="2006" name="Plant Cell">
        <title>A rice glutamate receptor-like gene is critical for the division and survival of individual cells in the root apical meristem.</title>
        <authorList>
            <person name="Li J."/>
            <person name="Zhu S."/>
            <person name="Song X."/>
            <person name="Shen Y."/>
            <person name="Chen H."/>
            <person name="Yu J."/>
            <person name="Yi K."/>
            <person name="Liu Y."/>
            <person name="Karplus V.J."/>
            <person name="Wu P."/>
            <person name="Deng X.W."/>
        </authorList>
    </citation>
    <scope>NUCLEOTIDE SEQUENCE [MRNA]</scope>
    <scope>FUNCTION</scope>
    <scope>SUBUNIT</scope>
    <scope>TISSUE SPECIFICITY</scope>
    <scope>DISRUPTION PHENOTYPE</scope>
</reference>
<reference key="2">
    <citation type="journal article" date="2002" name="Nature">
        <title>Sequence and analysis of rice chromosome 4.</title>
        <authorList>
            <person name="Feng Q."/>
            <person name="Zhang Y."/>
            <person name="Hao P."/>
            <person name="Wang S."/>
            <person name="Fu G."/>
            <person name="Huang Y."/>
            <person name="Li Y."/>
            <person name="Zhu J."/>
            <person name="Liu Y."/>
            <person name="Hu X."/>
            <person name="Jia P."/>
            <person name="Zhang Y."/>
            <person name="Zhao Q."/>
            <person name="Ying K."/>
            <person name="Yu S."/>
            <person name="Tang Y."/>
            <person name="Weng Q."/>
            <person name="Zhang L."/>
            <person name="Lu Y."/>
            <person name="Mu J."/>
            <person name="Lu Y."/>
            <person name="Zhang L.S."/>
            <person name="Yu Z."/>
            <person name="Fan D."/>
            <person name="Liu X."/>
            <person name="Lu T."/>
            <person name="Li C."/>
            <person name="Wu Y."/>
            <person name="Sun T."/>
            <person name="Lei H."/>
            <person name="Li T."/>
            <person name="Hu H."/>
            <person name="Guan J."/>
            <person name="Wu M."/>
            <person name="Zhang R."/>
            <person name="Zhou B."/>
            <person name="Chen Z."/>
            <person name="Chen L."/>
            <person name="Jin Z."/>
            <person name="Wang R."/>
            <person name="Yin H."/>
            <person name="Cai Z."/>
            <person name="Ren S."/>
            <person name="Lv G."/>
            <person name="Gu W."/>
            <person name="Zhu G."/>
            <person name="Tu Y."/>
            <person name="Jia J."/>
            <person name="Zhang Y."/>
            <person name="Chen J."/>
            <person name="Kang H."/>
            <person name="Chen X."/>
            <person name="Shao C."/>
            <person name="Sun Y."/>
            <person name="Hu Q."/>
            <person name="Zhang X."/>
            <person name="Zhang W."/>
            <person name="Wang L."/>
            <person name="Ding C."/>
            <person name="Sheng H."/>
            <person name="Gu J."/>
            <person name="Chen S."/>
            <person name="Ni L."/>
            <person name="Zhu F."/>
            <person name="Chen W."/>
            <person name="Lan L."/>
            <person name="Lai Y."/>
            <person name="Cheng Z."/>
            <person name="Gu M."/>
            <person name="Jiang J."/>
            <person name="Li J."/>
            <person name="Hong G."/>
            <person name="Xue Y."/>
            <person name="Han B."/>
        </authorList>
    </citation>
    <scope>NUCLEOTIDE SEQUENCE [LARGE SCALE GENOMIC DNA]</scope>
    <source>
        <strain>cv. Nipponbare</strain>
    </source>
</reference>
<reference key="3">
    <citation type="journal article" date="2005" name="Nature">
        <title>The map-based sequence of the rice genome.</title>
        <authorList>
            <consortium name="International rice genome sequencing project (IRGSP)"/>
        </authorList>
    </citation>
    <scope>NUCLEOTIDE SEQUENCE [LARGE SCALE GENOMIC DNA]</scope>
    <source>
        <strain>cv. Nipponbare</strain>
    </source>
</reference>
<reference key="4">
    <citation type="journal article" date="2013" name="Rice">
        <title>Improvement of the Oryza sativa Nipponbare reference genome using next generation sequence and optical map data.</title>
        <authorList>
            <person name="Kawahara Y."/>
            <person name="de la Bastide M."/>
            <person name="Hamilton J.P."/>
            <person name="Kanamori H."/>
            <person name="McCombie W.R."/>
            <person name="Ouyang S."/>
            <person name="Schwartz D.C."/>
            <person name="Tanaka T."/>
            <person name="Wu J."/>
            <person name="Zhou S."/>
            <person name="Childs K.L."/>
            <person name="Davidson R.M."/>
            <person name="Lin H."/>
            <person name="Quesada-Ocampo L."/>
            <person name="Vaillancourt B."/>
            <person name="Sakai H."/>
            <person name="Lee S.S."/>
            <person name="Kim J."/>
            <person name="Numa H."/>
            <person name="Itoh T."/>
            <person name="Buell C.R."/>
            <person name="Matsumoto T."/>
        </authorList>
    </citation>
    <scope>GENOME REANNOTATION</scope>
    <source>
        <strain>cv. Nipponbare</strain>
    </source>
</reference>
<sequence>MKFIFYLFSIFCCLCSCAQSQNISGRPDAVRIGAQFARNSTIGRVAAVAVLAAVNDINNDSNILPGTKLDLHMHDSSCNRFLGIVQALQFMEKDTVAIIGPLSSTTAHVLSHLANELHVPLMSFSATDPTLSSLEYPFFVRTTVSDQFQMTAVADLVEYYGWKQVTTIFVDNDYGRNAISSLGDELSKRRSKILYKAPFRPGASNNEIADVLIKVAMMESRVIILHANPDSGLVVFQQALKLGMVSNGYAWIATDWLTSYLDPSVHLDIGLLSTMQGVLTLRHHTENTRRKSMLSSKWSELLKEDSGHSRFLLSTYGLYAYDTVWMLAHALDAFFNSGGNISFSPDPKLNEISGRGLNLEALSVFDGGQLLLEKIHQVDFLGATGPVKFDSGGNLIQPAYDIVSIIGSGLRTVGYWSNYSGLSVISPETLYKKPANRTRETQKLHDVIWPGETINKPRGWVFPNNGNEIKIGVPDRVSYRQFVSVDSETGMVRGLCIDVFVAAINLLAYPVPYRFVPFGNNRENPSYSELINKIITDDFDAVVGDVTIITNRTKVVDFTQPYVSSGLVVLTSVKRQNSGGWAFLQPFTIKMWTVTGLFFLIIGTVVWMLEHRINDEFRGPPAKQLITVFWFSFSTLFFAHREDTRSTLGRFVIIIWLFVVLIIQSSYTASLTSILTVQQLTSPITGIDSLITSDVPIGFQVGSFAENYLAQELGVAHSRLKALGSPEEYKKALDLGPSKGGVAAIVDERPYIELFLYQNPKFAVVGSEFTKSGWGFAFPRDSPLSVDLSTAILELSENGDLQRIHDKWLASDMSSMSQASELDQDPDRLDVYSFSALFLICGLACIFALAIHACNLFYQYSRHAAEEDPAALQPSASDGSRSLSRRSKLQSFLSFADRREADIRRAAKEKASGLGGSGGSMSGVSFTSSGSGSTTASC</sequence>
<protein>
    <recommendedName>
        <fullName>Glutamate receptor 3.1</fullName>
    </recommendedName>
    <alternativeName>
        <fullName>Ligand-gated ion channel 3.1</fullName>
    </alternativeName>
</protein>
<gene>
    <name type="primary">GLR3.1</name>
    <name type="ordered locus">Os04g0585200</name>
    <name type="ordered locus">LOC_Os04g49570</name>
    <name type="ORF">OSJNBa0013K16.8</name>
</gene>
<dbReference type="EMBL" id="DQ305408">
    <property type="protein sequence ID" value="ABC33859.1"/>
    <property type="molecule type" value="mRNA"/>
</dbReference>
<dbReference type="EMBL" id="AL662957">
    <property type="protein sequence ID" value="CAE03759.1"/>
    <property type="molecule type" value="Genomic_DNA"/>
</dbReference>
<dbReference type="EMBL" id="AP014960">
    <property type="status" value="NOT_ANNOTATED_CDS"/>
    <property type="molecule type" value="Genomic_DNA"/>
</dbReference>
<dbReference type="RefSeq" id="NP_001389345.1">
    <property type="nucleotide sequence ID" value="NM_001402416.1"/>
</dbReference>
<dbReference type="RefSeq" id="XP_066165237.1">
    <property type="nucleotide sequence ID" value="XM_066309140.1"/>
</dbReference>
<dbReference type="RefSeq" id="XP_066165238.1">
    <property type="nucleotide sequence ID" value="XM_066309141.1"/>
</dbReference>
<dbReference type="SMR" id="Q7XP59"/>
<dbReference type="FunCoup" id="Q7XP59">
    <property type="interactions" value="750"/>
</dbReference>
<dbReference type="STRING" id="39947.Q7XP59"/>
<dbReference type="GlyCosmos" id="Q7XP59">
    <property type="glycosylation" value="7 sites, No reported glycans"/>
</dbReference>
<dbReference type="PaxDb" id="39947-Q7XP59"/>
<dbReference type="GeneID" id="124544569"/>
<dbReference type="eggNOG" id="KOG1052">
    <property type="taxonomic scope" value="Eukaryota"/>
</dbReference>
<dbReference type="HOGENOM" id="CLU_007358_2_0_1"/>
<dbReference type="InParanoid" id="Q7XP59"/>
<dbReference type="Proteomes" id="UP000000763">
    <property type="component" value="Chromosome 4"/>
</dbReference>
<dbReference type="Proteomes" id="UP000059680">
    <property type="component" value="Chromosome 4"/>
</dbReference>
<dbReference type="GO" id="GO:0005886">
    <property type="term" value="C:plasma membrane"/>
    <property type="evidence" value="ECO:0000318"/>
    <property type="project" value="GO_Central"/>
</dbReference>
<dbReference type="GO" id="GO:0015276">
    <property type="term" value="F:ligand-gated monoatomic ion channel activity"/>
    <property type="evidence" value="ECO:0007669"/>
    <property type="project" value="InterPro"/>
</dbReference>
<dbReference type="GO" id="GO:0038023">
    <property type="term" value="F:signaling receptor activity"/>
    <property type="evidence" value="ECO:0000318"/>
    <property type="project" value="GO_Central"/>
</dbReference>
<dbReference type="CDD" id="cd13686">
    <property type="entry name" value="GluR_Plant"/>
    <property type="match status" value="1"/>
</dbReference>
<dbReference type="CDD" id="cd19990">
    <property type="entry name" value="PBP1_GABAb_receptor_plant"/>
    <property type="match status" value="1"/>
</dbReference>
<dbReference type="FunFam" id="1.10.287.70:FF:000037">
    <property type="entry name" value="Glutamate receptor"/>
    <property type="match status" value="1"/>
</dbReference>
<dbReference type="FunFam" id="3.40.190.10:FF:000175">
    <property type="entry name" value="Glutamate receptor"/>
    <property type="match status" value="1"/>
</dbReference>
<dbReference type="FunFam" id="3.40.190.10:FF:000266">
    <property type="entry name" value="Glutamate receptor"/>
    <property type="match status" value="1"/>
</dbReference>
<dbReference type="FunFam" id="3.40.50.2300:FF:000081">
    <property type="entry name" value="Glutamate receptor"/>
    <property type="match status" value="1"/>
</dbReference>
<dbReference type="Gene3D" id="1.10.287.70">
    <property type="match status" value="1"/>
</dbReference>
<dbReference type="Gene3D" id="3.40.50.2300">
    <property type="match status" value="2"/>
</dbReference>
<dbReference type="Gene3D" id="3.40.190.10">
    <property type="entry name" value="Periplasmic binding protein-like II"/>
    <property type="match status" value="3"/>
</dbReference>
<dbReference type="InterPro" id="IPR001828">
    <property type="entry name" value="ANF_lig-bd_rcpt"/>
</dbReference>
<dbReference type="InterPro" id="IPR044440">
    <property type="entry name" value="GABAb_receptor_plant_PBP1"/>
</dbReference>
<dbReference type="InterPro" id="IPR015683">
    <property type="entry name" value="Ionotropic_Glu_rcpt"/>
</dbReference>
<dbReference type="InterPro" id="IPR001320">
    <property type="entry name" value="Iontro_rcpt_C"/>
</dbReference>
<dbReference type="InterPro" id="IPR017103">
    <property type="entry name" value="Iontropic_Glu_rcpt_pln"/>
</dbReference>
<dbReference type="InterPro" id="IPR028082">
    <property type="entry name" value="Peripla_BP_I"/>
</dbReference>
<dbReference type="InterPro" id="IPR001638">
    <property type="entry name" value="Solute-binding_3/MltF_N"/>
</dbReference>
<dbReference type="PANTHER" id="PTHR18966">
    <property type="entry name" value="IONOTROPIC GLUTAMATE RECEPTOR"/>
    <property type="match status" value="1"/>
</dbReference>
<dbReference type="Pfam" id="PF01094">
    <property type="entry name" value="ANF_receptor"/>
    <property type="match status" value="1"/>
</dbReference>
<dbReference type="Pfam" id="PF00060">
    <property type="entry name" value="Lig_chan"/>
    <property type="match status" value="1"/>
</dbReference>
<dbReference type="Pfam" id="PF00497">
    <property type="entry name" value="SBP_bac_3"/>
    <property type="match status" value="1"/>
</dbReference>
<dbReference type="PIRSF" id="PIRSF037090">
    <property type="entry name" value="Iontro_Glu-like_rcpt_pln"/>
    <property type="match status" value="1"/>
</dbReference>
<dbReference type="SMART" id="SM00079">
    <property type="entry name" value="PBPe"/>
    <property type="match status" value="1"/>
</dbReference>
<dbReference type="SUPFAM" id="SSF53822">
    <property type="entry name" value="Periplasmic binding protein-like I"/>
    <property type="match status" value="1"/>
</dbReference>
<dbReference type="SUPFAM" id="SSF53850">
    <property type="entry name" value="Periplasmic binding protein-like II"/>
    <property type="match status" value="1"/>
</dbReference>
<evidence type="ECO:0000255" key="1"/>
<evidence type="ECO:0000256" key="2">
    <source>
        <dbReference type="SAM" id="MobiDB-lite"/>
    </source>
</evidence>
<evidence type="ECO:0000269" key="3">
    <source>
    </source>
</evidence>
<evidence type="ECO:0000305" key="4"/>
<name>GLR31_ORYSJ</name>
<keyword id="KW-0325">Glycoprotein</keyword>
<keyword id="KW-0407">Ion channel</keyword>
<keyword id="KW-0406">Ion transport</keyword>
<keyword id="KW-1071">Ligand-gated ion channel</keyword>
<keyword id="KW-0472">Membrane</keyword>
<keyword id="KW-0675">Receptor</keyword>
<keyword id="KW-1185">Reference proteome</keyword>
<keyword id="KW-0732">Signal</keyword>
<keyword id="KW-0346">Stress response</keyword>
<keyword id="KW-0812">Transmembrane</keyword>
<keyword id="KW-1133">Transmembrane helix</keyword>
<keyword id="KW-0813">Transport</keyword>
<organism>
    <name type="scientific">Oryza sativa subsp. japonica</name>
    <name type="common">Rice</name>
    <dbReference type="NCBI Taxonomy" id="39947"/>
    <lineage>
        <taxon>Eukaryota</taxon>
        <taxon>Viridiplantae</taxon>
        <taxon>Streptophyta</taxon>
        <taxon>Embryophyta</taxon>
        <taxon>Tracheophyta</taxon>
        <taxon>Spermatophyta</taxon>
        <taxon>Magnoliopsida</taxon>
        <taxon>Liliopsida</taxon>
        <taxon>Poales</taxon>
        <taxon>Poaceae</taxon>
        <taxon>BOP clade</taxon>
        <taxon>Oryzoideae</taxon>
        <taxon>Oryzeae</taxon>
        <taxon>Oryzinae</taxon>
        <taxon>Oryza</taxon>
        <taxon>Oryza sativa</taxon>
    </lineage>
</organism>